<organism>
    <name type="scientific">Drosophila melanogaster</name>
    <name type="common">Fruit fly</name>
    <dbReference type="NCBI Taxonomy" id="7227"/>
    <lineage>
        <taxon>Eukaryota</taxon>
        <taxon>Metazoa</taxon>
        <taxon>Ecdysozoa</taxon>
        <taxon>Arthropoda</taxon>
        <taxon>Hexapoda</taxon>
        <taxon>Insecta</taxon>
        <taxon>Pterygota</taxon>
        <taxon>Neoptera</taxon>
        <taxon>Endopterygota</taxon>
        <taxon>Diptera</taxon>
        <taxon>Brachycera</taxon>
        <taxon>Muscomorpha</taxon>
        <taxon>Ephydroidea</taxon>
        <taxon>Drosophilidae</taxon>
        <taxon>Drosophila</taxon>
        <taxon>Sophophora</taxon>
    </lineage>
</organism>
<evidence type="ECO:0000255" key="1">
    <source>
        <dbReference type="HAMAP-Rule" id="MF_03155"/>
    </source>
</evidence>
<feature type="chain" id="PRO_0000415088" description="Purine nucleoside phosphorylase">
    <location>
        <begin position="1"/>
        <end position="290"/>
    </location>
</feature>
<feature type="binding site" evidence="1">
    <location>
        <begin position="68"/>
        <end position="69"/>
    </location>
    <ligand>
        <name>phosphate</name>
        <dbReference type="ChEBI" id="CHEBI:43474"/>
    </ligand>
</feature>
<feature type="binding site" evidence="1">
    <location>
        <position position="204"/>
    </location>
    <ligand>
        <name>substrate</name>
    </ligand>
</feature>
<feature type="binding site" evidence="1">
    <location>
        <position position="205"/>
    </location>
    <ligand>
        <name>phosphate</name>
        <dbReference type="ChEBI" id="CHEBI:43474"/>
    </ligand>
</feature>
<feature type="site" description="Important for substrate specificity" evidence="1">
    <location>
        <position position="186"/>
    </location>
</feature>
<feature type="site" description="Important for substrate specificity" evidence="1">
    <location>
        <position position="241"/>
    </location>
</feature>
<dbReference type="EC" id="2.4.2.1" evidence="1"/>
<dbReference type="EMBL" id="AE014297">
    <property type="protein sequence ID" value="AAN14032.2"/>
    <property type="molecule type" value="Genomic_DNA"/>
</dbReference>
<dbReference type="RefSeq" id="NP_733068.2">
    <property type="nucleotide sequence ID" value="NM_170189.3"/>
</dbReference>
<dbReference type="SMR" id="Q8IMU4"/>
<dbReference type="BioGRID" id="76914">
    <property type="interactions" value="1"/>
</dbReference>
<dbReference type="FunCoup" id="Q8IMU4">
    <property type="interactions" value="107"/>
</dbReference>
<dbReference type="STRING" id="7227.FBpp0288492"/>
<dbReference type="PaxDb" id="7227-FBpp0288492"/>
<dbReference type="DNASU" id="318597"/>
<dbReference type="EnsemblMetazoa" id="FBtr0290053">
    <property type="protein sequence ID" value="FBpp0288492"/>
    <property type="gene ID" value="FBgn0051115"/>
</dbReference>
<dbReference type="GeneID" id="318597"/>
<dbReference type="KEGG" id="dme:Dmel_CG31115"/>
<dbReference type="UCSC" id="CG31115-RB">
    <property type="organism name" value="d. melanogaster"/>
</dbReference>
<dbReference type="AGR" id="FB:FBgn0051115"/>
<dbReference type="FlyBase" id="FBgn0051115">
    <property type="gene designation" value="CG31115"/>
</dbReference>
<dbReference type="VEuPathDB" id="VectorBase:FBgn0051115"/>
<dbReference type="eggNOG" id="KOG3985">
    <property type="taxonomic scope" value="Eukaryota"/>
</dbReference>
<dbReference type="GeneTree" id="ENSGT00950000182991"/>
<dbReference type="HOGENOM" id="CLU_054456_0_0_1"/>
<dbReference type="InParanoid" id="Q8IMU4"/>
<dbReference type="OMA" id="CTPFGKP"/>
<dbReference type="OrthoDB" id="431409at2759"/>
<dbReference type="PhylomeDB" id="Q8IMU4"/>
<dbReference type="UniPathway" id="UPA00606"/>
<dbReference type="BioGRID-ORCS" id="318597">
    <property type="hits" value="0 hits in 1 CRISPR screen"/>
</dbReference>
<dbReference type="GenomeRNAi" id="318597"/>
<dbReference type="PRO" id="PR:Q8IMU4"/>
<dbReference type="Proteomes" id="UP000000803">
    <property type="component" value="Chromosome 3R"/>
</dbReference>
<dbReference type="Bgee" id="FBgn0051115">
    <property type="expression patterns" value="Expressed in early-mid elongation-stage spermatid (Drosophila) in testis and 25 other cell types or tissues"/>
</dbReference>
<dbReference type="ExpressionAtlas" id="Q8IMU4">
    <property type="expression patterns" value="baseline and differential"/>
</dbReference>
<dbReference type="GO" id="GO:0005829">
    <property type="term" value="C:cytosol"/>
    <property type="evidence" value="ECO:0000318"/>
    <property type="project" value="GO_Central"/>
</dbReference>
<dbReference type="GO" id="GO:0005634">
    <property type="term" value="C:nucleus"/>
    <property type="evidence" value="ECO:0007669"/>
    <property type="project" value="UniProtKB-SubCell"/>
</dbReference>
<dbReference type="GO" id="GO:0017061">
    <property type="term" value="F:S-methyl-5-thioadenosine phosphorylase activity"/>
    <property type="evidence" value="ECO:0000318"/>
    <property type="project" value="GO_Central"/>
</dbReference>
<dbReference type="GO" id="GO:0019509">
    <property type="term" value="P:L-methionine salvage from methylthioadenosine"/>
    <property type="evidence" value="ECO:0000318"/>
    <property type="project" value="GO_Central"/>
</dbReference>
<dbReference type="GO" id="GO:0006166">
    <property type="term" value="P:purine ribonucleoside salvage"/>
    <property type="evidence" value="ECO:0007669"/>
    <property type="project" value="UniProtKB-UniRule"/>
</dbReference>
<dbReference type="CDD" id="cd09010">
    <property type="entry name" value="MTAP_SsMTAPII_like_MTIP"/>
    <property type="match status" value="1"/>
</dbReference>
<dbReference type="FunFam" id="3.40.50.1580:FF:000024">
    <property type="entry name" value="Purine nucleoside phosphorylase"/>
    <property type="match status" value="1"/>
</dbReference>
<dbReference type="Gene3D" id="3.40.50.1580">
    <property type="entry name" value="Nucleoside phosphorylase domain"/>
    <property type="match status" value="1"/>
</dbReference>
<dbReference type="HAMAP" id="MF_01963">
    <property type="entry name" value="MTAP"/>
    <property type="match status" value="1"/>
</dbReference>
<dbReference type="InterPro" id="IPR010044">
    <property type="entry name" value="MTAP"/>
</dbReference>
<dbReference type="InterPro" id="IPR000845">
    <property type="entry name" value="Nucleoside_phosphorylase_d"/>
</dbReference>
<dbReference type="InterPro" id="IPR035994">
    <property type="entry name" value="Nucleoside_phosphorylase_sf"/>
</dbReference>
<dbReference type="PANTHER" id="PTHR42679">
    <property type="entry name" value="S-METHYL-5'-THIOADENOSINE PHOSPHORYLASE"/>
    <property type="match status" value="1"/>
</dbReference>
<dbReference type="PANTHER" id="PTHR42679:SF2">
    <property type="entry name" value="S-METHYL-5'-THIOADENOSINE PHOSPHORYLASE"/>
    <property type="match status" value="1"/>
</dbReference>
<dbReference type="Pfam" id="PF01048">
    <property type="entry name" value="PNP_UDP_1"/>
    <property type="match status" value="1"/>
</dbReference>
<dbReference type="SUPFAM" id="SSF53167">
    <property type="entry name" value="Purine and uridine phosphorylases"/>
    <property type="match status" value="1"/>
</dbReference>
<gene>
    <name type="ORF">CG31115</name>
</gene>
<keyword id="KW-0963">Cytoplasm</keyword>
<keyword id="KW-0328">Glycosyltransferase</keyword>
<keyword id="KW-0539">Nucleus</keyword>
<keyword id="KW-0660">Purine salvage</keyword>
<keyword id="KW-1185">Reference proteome</keyword>
<keyword id="KW-0808">Transferase</keyword>
<comment type="function">
    <text evidence="1">Purine nucleoside phosphorylase involved in purine salvage.</text>
</comment>
<comment type="catalytic activity">
    <reaction evidence="1">
        <text>a purine D-ribonucleoside + phosphate = a purine nucleobase + alpha-D-ribose 1-phosphate</text>
        <dbReference type="Rhea" id="RHEA:19805"/>
        <dbReference type="ChEBI" id="CHEBI:26386"/>
        <dbReference type="ChEBI" id="CHEBI:43474"/>
        <dbReference type="ChEBI" id="CHEBI:57720"/>
        <dbReference type="ChEBI" id="CHEBI:142355"/>
        <dbReference type="EC" id="2.4.2.1"/>
    </reaction>
</comment>
<comment type="pathway">
    <text evidence="1">Purine metabolism; purine nucleoside salvage.</text>
</comment>
<comment type="subunit">
    <text evidence="1">Homotrimer.</text>
</comment>
<comment type="subcellular location">
    <subcellularLocation>
        <location evidence="1">Cytoplasm</location>
    </subcellularLocation>
    <subcellularLocation>
        <location evidence="1">Nucleus</location>
    </subcellularLocation>
</comment>
<comment type="miscellaneous">
    <text evidence="1">Although this enzyme belongs to the family of MTA phosphorylases based on sequence homology, it lacks several conserved amino acids in the substrate binding pocket that confer specificity towards MTA.</text>
</comment>
<comment type="similarity">
    <text evidence="1">Belongs to the PNP/MTAP phosphorylase family. MTAP subfamily.</text>
</comment>
<reference key="1">
    <citation type="journal article" date="2000" name="Science">
        <title>The genome sequence of Drosophila melanogaster.</title>
        <authorList>
            <person name="Adams M.D."/>
            <person name="Celniker S.E."/>
            <person name="Holt R.A."/>
            <person name="Evans C.A."/>
            <person name="Gocayne J.D."/>
            <person name="Amanatides P.G."/>
            <person name="Scherer S.E."/>
            <person name="Li P.W."/>
            <person name="Hoskins R.A."/>
            <person name="Galle R.F."/>
            <person name="George R.A."/>
            <person name="Lewis S.E."/>
            <person name="Richards S."/>
            <person name="Ashburner M."/>
            <person name="Henderson S.N."/>
            <person name="Sutton G.G."/>
            <person name="Wortman J.R."/>
            <person name="Yandell M.D."/>
            <person name="Zhang Q."/>
            <person name="Chen L.X."/>
            <person name="Brandon R.C."/>
            <person name="Rogers Y.-H.C."/>
            <person name="Blazej R.G."/>
            <person name="Champe M."/>
            <person name="Pfeiffer B.D."/>
            <person name="Wan K.H."/>
            <person name="Doyle C."/>
            <person name="Baxter E.G."/>
            <person name="Helt G."/>
            <person name="Nelson C.R."/>
            <person name="Miklos G.L.G."/>
            <person name="Abril J.F."/>
            <person name="Agbayani A."/>
            <person name="An H.-J."/>
            <person name="Andrews-Pfannkoch C."/>
            <person name="Baldwin D."/>
            <person name="Ballew R.M."/>
            <person name="Basu A."/>
            <person name="Baxendale J."/>
            <person name="Bayraktaroglu L."/>
            <person name="Beasley E.M."/>
            <person name="Beeson K.Y."/>
            <person name="Benos P.V."/>
            <person name="Berman B.P."/>
            <person name="Bhandari D."/>
            <person name="Bolshakov S."/>
            <person name="Borkova D."/>
            <person name="Botchan M.R."/>
            <person name="Bouck J."/>
            <person name="Brokstein P."/>
            <person name="Brottier P."/>
            <person name="Burtis K.C."/>
            <person name="Busam D.A."/>
            <person name="Butler H."/>
            <person name="Cadieu E."/>
            <person name="Center A."/>
            <person name="Chandra I."/>
            <person name="Cherry J.M."/>
            <person name="Cawley S."/>
            <person name="Dahlke C."/>
            <person name="Davenport L.B."/>
            <person name="Davies P."/>
            <person name="de Pablos B."/>
            <person name="Delcher A."/>
            <person name="Deng Z."/>
            <person name="Mays A.D."/>
            <person name="Dew I."/>
            <person name="Dietz S.M."/>
            <person name="Dodson K."/>
            <person name="Doup L.E."/>
            <person name="Downes M."/>
            <person name="Dugan-Rocha S."/>
            <person name="Dunkov B.C."/>
            <person name="Dunn P."/>
            <person name="Durbin K.J."/>
            <person name="Evangelista C.C."/>
            <person name="Ferraz C."/>
            <person name="Ferriera S."/>
            <person name="Fleischmann W."/>
            <person name="Fosler C."/>
            <person name="Gabrielian A.E."/>
            <person name="Garg N.S."/>
            <person name="Gelbart W.M."/>
            <person name="Glasser K."/>
            <person name="Glodek A."/>
            <person name="Gong F."/>
            <person name="Gorrell J.H."/>
            <person name="Gu Z."/>
            <person name="Guan P."/>
            <person name="Harris M."/>
            <person name="Harris N.L."/>
            <person name="Harvey D.A."/>
            <person name="Heiman T.J."/>
            <person name="Hernandez J.R."/>
            <person name="Houck J."/>
            <person name="Hostin D."/>
            <person name="Houston K.A."/>
            <person name="Howland T.J."/>
            <person name="Wei M.-H."/>
            <person name="Ibegwam C."/>
            <person name="Jalali M."/>
            <person name="Kalush F."/>
            <person name="Karpen G.H."/>
            <person name="Ke Z."/>
            <person name="Kennison J.A."/>
            <person name="Ketchum K.A."/>
            <person name="Kimmel B.E."/>
            <person name="Kodira C.D."/>
            <person name="Kraft C.L."/>
            <person name="Kravitz S."/>
            <person name="Kulp D."/>
            <person name="Lai Z."/>
            <person name="Lasko P."/>
            <person name="Lei Y."/>
            <person name="Levitsky A.A."/>
            <person name="Li J.H."/>
            <person name="Li Z."/>
            <person name="Liang Y."/>
            <person name="Lin X."/>
            <person name="Liu X."/>
            <person name="Mattei B."/>
            <person name="McIntosh T.C."/>
            <person name="McLeod M.P."/>
            <person name="McPherson D."/>
            <person name="Merkulov G."/>
            <person name="Milshina N.V."/>
            <person name="Mobarry C."/>
            <person name="Morris J."/>
            <person name="Moshrefi A."/>
            <person name="Mount S.M."/>
            <person name="Moy M."/>
            <person name="Murphy B."/>
            <person name="Murphy L."/>
            <person name="Muzny D.M."/>
            <person name="Nelson D.L."/>
            <person name="Nelson D.R."/>
            <person name="Nelson K.A."/>
            <person name="Nixon K."/>
            <person name="Nusskern D.R."/>
            <person name="Pacleb J.M."/>
            <person name="Palazzolo M."/>
            <person name="Pittman G.S."/>
            <person name="Pan S."/>
            <person name="Pollard J."/>
            <person name="Puri V."/>
            <person name="Reese M.G."/>
            <person name="Reinert K."/>
            <person name="Remington K."/>
            <person name="Saunders R.D.C."/>
            <person name="Scheeler F."/>
            <person name="Shen H."/>
            <person name="Shue B.C."/>
            <person name="Siden-Kiamos I."/>
            <person name="Simpson M."/>
            <person name="Skupski M.P."/>
            <person name="Smith T.J."/>
            <person name="Spier E."/>
            <person name="Spradling A.C."/>
            <person name="Stapleton M."/>
            <person name="Strong R."/>
            <person name="Sun E."/>
            <person name="Svirskas R."/>
            <person name="Tector C."/>
            <person name="Turner R."/>
            <person name="Venter E."/>
            <person name="Wang A.H."/>
            <person name="Wang X."/>
            <person name="Wang Z.-Y."/>
            <person name="Wassarman D.A."/>
            <person name="Weinstock G.M."/>
            <person name="Weissenbach J."/>
            <person name="Williams S.M."/>
            <person name="Woodage T."/>
            <person name="Worley K.C."/>
            <person name="Wu D."/>
            <person name="Yang S."/>
            <person name="Yao Q.A."/>
            <person name="Ye J."/>
            <person name="Yeh R.-F."/>
            <person name="Zaveri J.S."/>
            <person name="Zhan M."/>
            <person name="Zhang G."/>
            <person name="Zhao Q."/>
            <person name="Zheng L."/>
            <person name="Zheng X.H."/>
            <person name="Zhong F.N."/>
            <person name="Zhong W."/>
            <person name="Zhou X."/>
            <person name="Zhu S.C."/>
            <person name="Zhu X."/>
            <person name="Smith H.O."/>
            <person name="Gibbs R.A."/>
            <person name="Myers E.W."/>
            <person name="Rubin G.M."/>
            <person name="Venter J.C."/>
        </authorList>
    </citation>
    <scope>NUCLEOTIDE SEQUENCE [LARGE SCALE GENOMIC DNA]</scope>
    <source>
        <strain>Berkeley</strain>
    </source>
</reference>
<reference key="2">
    <citation type="journal article" date="2002" name="Genome Biol.">
        <title>Annotation of the Drosophila melanogaster euchromatic genome: a systematic review.</title>
        <authorList>
            <person name="Misra S."/>
            <person name="Crosby M.A."/>
            <person name="Mungall C.J."/>
            <person name="Matthews B.B."/>
            <person name="Campbell K.S."/>
            <person name="Hradecky P."/>
            <person name="Huang Y."/>
            <person name="Kaminker J.S."/>
            <person name="Millburn G.H."/>
            <person name="Prochnik S.E."/>
            <person name="Smith C.D."/>
            <person name="Tupy J.L."/>
            <person name="Whitfield E.J."/>
            <person name="Bayraktaroglu L."/>
            <person name="Berman B.P."/>
            <person name="Bettencourt B.R."/>
            <person name="Celniker S.E."/>
            <person name="de Grey A.D.N.J."/>
            <person name="Drysdale R.A."/>
            <person name="Harris N.L."/>
            <person name="Richter J."/>
            <person name="Russo S."/>
            <person name="Schroeder A.J."/>
            <person name="Shu S.Q."/>
            <person name="Stapleton M."/>
            <person name="Yamada C."/>
            <person name="Ashburner M."/>
            <person name="Gelbart W.M."/>
            <person name="Rubin G.M."/>
            <person name="Lewis S.E."/>
        </authorList>
    </citation>
    <scope>GENOME REANNOTATION</scope>
    <source>
        <strain>Berkeley</strain>
    </source>
</reference>
<proteinExistence type="inferred from homology"/>
<sequence>MEADLEVQSELEKDTIPIKIGIIGEANLDKPIYLAERMEYAVCTPFGKPSDVIIDGQIEGVNVCLLSRNGRNHDIMPSNINYRANVWAMRKMGCTHILVTNTFSSLRDTFQPGHLVVPNDVIDYTSRRAQTFYDGAVGSPLGVCHVPMNPTFCERTRQHLLSAAEELGFPTGSSGTVLTLEGPRYSTVAENNMFRKWGADLLSMTLCPEAILAKEAGIPYASLGLVTNMECWCAKQPNATTHEIIYIFKKQSENLQKVLITAIRNMAAEDWAEDILKAKILVCSNFANSK</sequence>
<protein>
    <recommendedName>
        <fullName evidence="1">Purine nucleoside phosphorylase</fullName>
        <shortName evidence="1">PNP</shortName>
        <ecNumber evidence="1">2.4.2.1</ecNumber>
    </recommendedName>
</protein>
<accession>Q8IMU4</accession>
<name>PNPH_DROME</name>